<reference key="1">
    <citation type="journal article" date="2009" name="J. Bacteriol.">
        <title>Genomic sequencing reveals regulatory mutations and recombinational events in the widely used MC4100 lineage of Escherichia coli K-12.</title>
        <authorList>
            <person name="Ferenci T."/>
            <person name="Zhou Z."/>
            <person name="Betteridge T."/>
            <person name="Ren Y."/>
            <person name="Liu Y."/>
            <person name="Feng L."/>
            <person name="Reeves P.R."/>
            <person name="Wang L."/>
        </authorList>
    </citation>
    <scope>NUCLEOTIDE SEQUENCE [LARGE SCALE GENOMIC DNA]</scope>
    <source>
        <strain>K12 / MC4100 / BW2952</strain>
    </source>
</reference>
<feature type="chain" id="PRO_1000214036" description="HTH-type transcriptional repressor NanR">
    <location>
        <begin position="1"/>
        <end position="263"/>
    </location>
</feature>
<feature type="domain" description="HTH gntR-type" evidence="1">
    <location>
        <begin position="30"/>
        <end position="98"/>
    </location>
</feature>
<feature type="DNA-binding region" description="H-T-H motif" evidence="1">
    <location>
        <begin position="58"/>
        <end position="77"/>
    </location>
</feature>
<feature type="region of interest" description="Disordered" evidence="2">
    <location>
        <begin position="1"/>
        <end position="22"/>
    </location>
</feature>
<name>NANR_ECOBW</name>
<keyword id="KW-0238">DNA-binding</keyword>
<keyword id="KW-0678">Repressor</keyword>
<keyword id="KW-0804">Transcription</keyword>
<keyword id="KW-0805">Transcription regulation</keyword>
<dbReference type="EMBL" id="CP001396">
    <property type="protein sequence ID" value="ACR62919.1"/>
    <property type="molecule type" value="Genomic_DNA"/>
</dbReference>
<dbReference type="RefSeq" id="WP_000523845.1">
    <property type="nucleotide sequence ID" value="NC_012759.1"/>
</dbReference>
<dbReference type="SMR" id="C4ZSW4"/>
<dbReference type="GeneID" id="75206076"/>
<dbReference type="KEGG" id="ebw:BWG_2927"/>
<dbReference type="HOGENOM" id="CLU_017584_9_1_6"/>
<dbReference type="GO" id="GO:0003677">
    <property type="term" value="F:DNA binding"/>
    <property type="evidence" value="ECO:0007669"/>
    <property type="project" value="UniProtKB-KW"/>
</dbReference>
<dbReference type="GO" id="GO:0003700">
    <property type="term" value="F:DNA-binding transcription factor activity"/>
    <property type="evidence" value="ECO:0007669"/>
    <property type="project" value="UniProtKB-UniRule"/>
</dbReference>
<dbReference type="GO" id="GO:0045892">
    <property type="term" value="P:negative regulation of DNA-templated transcription"/>
    <property type="evidence" value="ECO:0007669"/>
    <property type="project" value="UniProtKB-UniRule"/>
</dbReference>
<dbReference type="CDD" id="cd07377">
    <property type="entry name" value="WHTH_GntR"/>
    <property type="match status" value="1"/>
</dbReference>
<dbReference type="FunFam" id="1.10.10.10:FF:000150">
    <property type="entry name" value="HTH-type transcriptional repressor NanR"/>
    <property type="match status" value="1"/>
</dbReference>
<dbReference type="FunFam" id="1.20.120.530:FF:000006">
    <property type="entry name" value="HTH-type transcriptional repressor NanR"/>
    <property type="match status" value="1"/>
</dbReference>
<dbReference type="Gene3D" id="1.20.120.530">
    <property type="entry name" value="GntR ligand-binding domain-like"/>
    <property type="match status" value="1"/>
</dbReference>
<dbReference type="Gene3D" id="1.10.10.10">
    <property type="entry name" value="Winged helix-like DNA-binding domain superfamily/Winged helix DNA-binding domain"/>
    <property type="match status" value="1"/>
</dbReference>
<dbReference type="HAMAP" id="MF_01236">
    <property type="entry name" value="HTH_NanR"/>
    <property type="match status" value="1"/>
</dbReference>
<dbReference type="InterPro" id="IPR011711">
    <property type="entry name" value="GntR_C"/>
</dbReference>
<dbReference type="InterPro" id="IPR008920">
    <property type="entry name" value="TF_FadR/GntR_C"/>
</dbReference>
<dbReference type="InterPro" id="IPR000524">
    <property type="entry name" value="Tscrpt_reg_HTH_GntR"/>
</dbReference>
<dbReference type="InterPro" id="IPR023730">
    <property type="entry name" value="Tscrpt_reg_NanR"/>
</dbReference>
<dbReference type="InterPro" id="IPR036388">
    <property type="entry name" value="WH-like_DNA-bd_sf"/>
</dbReference>
<dbReference type="InterPro" id="IPR036390">
    <property type="entry name" value="WH_DNA-bd_sf"/>
</dbReference>
<dbReference type="NCBIfam" id="NF003011">
    <property type="entry name" value="PRK03837.1"/>
    <property type="match status" value="1"/>
</dbReference>
<dbReference type="PANTHER" id="PTHR43537:SF53">
    <property type="entry name" value="HTH-TYPE TRANSCRIPTIONAL REPRESSOR NANR"/>
    <property type="match status" value="1"/>
</dbReference>
<dbReference type="PANTHER" id="PTHR43537">
    <property type="entry name" value="TRANSCRIPTIONAL REGULATOR, GNTR FAMILY"/>
    <property type="match status" value="1"/>
</dbReference>
<dbReference type="Pfam" id="PF07729">
    <property type="entry name" value="FCD"/>
    <property type="match status" value="1"/>
</dbReference>
<dbReference type="Pfam" id="PF00392">
    <property type="entry name" value="GntR"/>
    <property type="match status" value="1"/>
</dbReference>
<dbReference type="PRINTS" id="PR00035">
    <property type="entry name" value="HTHGNTR"/>
</dbReference>
<dbReference type="SMART" id="SM00895">
    <property type="entry name" value="FCD"/>
    <property type="match status" value="1"/>
</dbReference>
<dbReference type="SMART" id="SM00345">
    <property type="entry name" value="HTH_GNTR"/>
    <property type="match status" value="1"/>
</dbReference>
<dbReference type="SUPFAM" id="SSF48008">
    <property type="entry name" value="GntR ligand-binding domain-like"/>
    <property type="match status" value="1"/>
</dbReference>
<dbReference type="SUPFAM" id="SSF46785">
    <property type="entry name" value="Winged helix' DNA-binding domain"/>
    <property type="match status" value="1"/>
</dbReference>
<dbReference type="PROSITE" id="PS50949">
    <property type="entry name" value="HTH_GNTR"/>
    <property type="match status" value="1"/>
</dbReference>
<accession>C4ZSW4</accession>
<comment type="function">
    <text evidence="1">Transcriptional repressor that controls expression of the genes required for the catabolism of sialic acids.</text>
</comment>
<comment type="similarity">
    <text evidence="1">Belongs to the NanR family.</text>
</comment>
<sequence>MGLMNAFDSQTEDSSPAIGRNLRSRPLARKKLSEMVEEELEQMIRRREFGEGEQLPSERELMAFFNVGRPSVREALAALKRKGLVQINNGERARVSRPSADTIIGELSGMAKDFLSHPGGIAHFEQLRLFFESSLVRYAAEHATDEQIDLLAKALEINSQSLDNNAAFIRSDVDFHRVLAEIPGNPIFMAIHVALLDWLIAARPTVTDQALHEHNNVSYQQHIAIVDAIRRHDPDEADRALQSHLNSVSATWHAFGQTTNKKK</sequence>
<proteinExistence type="inferred from homology"/>
<organism>
    <name type="scientific">Escherichia coli (strain K12 / MC4100 / BW2952)</name>
    <dbReference type="NCBI Taxonomy" id="595496"/>
    <lineage>
        <taxon>Bacteria</taxon>
        <taxon>Pseudomonadati</taxon>
        <taxon>Pseudomonadota</taxon>
        <taxon>Gammaproteobacteria</taxon>
        <taxon>Enterobacterales</taxon>
        <taxon>Enterobacteriaceae</taxon>
        <taxon>Escherichia</taxon>
    </lineage>
</organism>
<evidence type="ECO:0000255" key="1">
    <source>
        <dbReference type="HAMAP-Rule" id="MF_01236"/>
    </source>
</evidence>
<evidence type="ECO:0000256" key="2">
    <source>
        <dbReference type="SAM" id="MobiDB-lite"/>
    </source>
</evidence>
<protein>
    <recommendedName>
        <fullName evidence="1">HTH-type transcriptional repressor NanR</fullName>
    </recommendedName>
</protein>
<gene>
    <name evidence="1" type="primary">nanR</name>
    <name type="ordered locus">BWG_2927</name>
</gene>